<comment type="function">
    <text evidence="1">Excises uracil residues from the DNA which can arise as a result of misincorporation of dUMP residues by DNA polymerase or due to deamination of cytosine.</text>
</comment>
<comment type="catalytic activity">
    <reaction evidence="1">
        <text>Hydrolyzes single-stranded DNA or mismatched double-stranded DNA and polynucleotides, releasing free uracil.</text>
        <dbReference type="EC" id="3.2.2.27"/>
    </reaction>
</comment>
<comment type="subcellular location">
    <subcellularLocation>
        <location evidence="1">Cytoplasm</location>
    </subcellularLocation>
</comment>
<comment type="similarity">
    <text evidence="1">Belongs to the uracil-DNA glycosylase (UDG) superfamily. UNG family.</text>
</comment>
<protein>
    <recommendedName>
        <fullName evidence="1">Uracil-DNA glycosylase</fullName>
        <shortName evidence="1">UDG</shortName>
        <ecNumber evidence="1">3.2.2.27</ecNumber>
    </recommendedName>
</protein>
<gene>
    <name evidence="1" type="primary">ung</name>
    <name type="ordered locus">USA300HOU_0574</name>
</gene>
<reference key="1">
    <citation type="journal article" date="2007" name="BMC Microbiol.">
        <title>Subtle genetic changes enhance virulence of methicillin resistant and sensitive Staphylococcus aureus.</title>
        <authorList>
            <person name="Highlander S.K."/>
            <person name="Hulten K.G."/>
            <person name="Qin X."/>
            <person name="Jiang H."/>
            <person name="Yerrapragada S."/>
            <person name="Mason E.O. Jr."/>
            <person name="Shang Y."/>
            <person name="Williams T.M."/>
            <person name="Fortunov R.M."/>
            <person name="Liu Y."/>
            <person name="Igboeli O."/>
            <person name="Petrosino J."/>
            <person name="Tirumalai M."/>
            <person name="Uzman A."/>
            <person name="Fox G.E."/>
            <person name="Cardenas A.M."/>
            <person name="Muzny D.M."/>
            <person name="Hemphill L."/>
            <person name="Ding Y."/>
            <person name="Dugan S."/>
            <person name="Blyth P.R."/>
            <person name="Buhay C.J."/>
            <person name="Dinh H.H."/>
            <person name="Hawes A.C."/>
            <person name="Holder M."/>
            <person name="Kovar C.L."/>
            <person name="Lee S.L."/>
            <person name="Liu W."/>
            <person name="Nazareth L.V."/>
            <person name="Wang Q."/>
            <person name="Zhou J."/>
            <person name="Kaplan S.L."/>
            <person name="Weinstock G.M."/>
        </authorList>
    </citation>
    <scope>NUCLEOTIDE SEQUENCE [LARGE SCALE GENOMIC DNA]</scope>
    <source>
        <strain>USA300 / TCH1516</strain>
    </source>
</reference>
<accession>A8YZS8</accession>
<organism>
    <name type="scientific">Staphylococcus aureus (strain USA300 / TCH1516)</name>
    <dbReference type="NCBI Taxonomy" id="451516"/>
    <lineage>
        <taxon>Bacteria</taxon>
        <taxon>Bacillati</taxon>
        <taxon>Bacillota</taxon>
        <taxon>Bacilli</taxon>
        <taxon>Bacillales</taxon>
        <taxon>Staphylococcaceae</taxon>
        <taxon>Staphylococcus</taxon>
    </lineage>
</organism>
<proteinExistence type="inferred from homology"/>
<evidence type="ECO:0000255" key="1">
    <source>
        <dbReference type="HAMAP-Rule" id="MF_00148"/>
    </source>
</evidence>
<name>UNG_STAAT</name>
<feature type="chain" id="PRO_1000076682" description="Uracil-DNA glycosylase">
    <location>
        <begin position="1"/>
        <end position="218"/>
    </location>
</feature>
<feature type="active site" description="Proton acceptor" evidence="1">
    <location>
        <position position="59"/>
    </location>
</feature>
<keyword id="KW-0963">Cytoplasm</keyword>
<keyword id="KW-0227">DNA damage</keyword>
<keyword id="KW-0234">DNA repair</keyword>
<keyword id="KW-0378">Hydrolase</keyword>
<dbReference type="EC" id="3.2.2.27" evidence="1"/>
<dbReference type="EMBL" id="CP000730">
    <property type="protein sequence ID" value="ABX28600.1"/>
    <property type="molecule type" value="Genomic_DNA"/>
</dbReference>
<dbReference type="RefSeq" id="WP_000455256.1">
    <property type="nucleotide sequence ID" value="NC_010079.1"/>
</dbReference>
<dbReference type="SMR" id="A8YZS8"/>
<dbReference type="KEGG" id="sax:USA300HOU_0574"/>
<dbReference type="HOGENOM" id="CLU_032162_3_1_9"/>
<dbReference type="GO" id="GO:0005737">
    <property type="term" value="C:cytoplasm"/>
    <property type="evidence" value="ECO:0007669"/>
    <property type="project" value="UniProtKB-SubCell"/>
</dbReference>
<dbReference type="GO" id="GO:0004844">
    <property type="term" value="F:uracil DNA N-glycosylase activity"/>
    <property type="evidence" value="ECO:0007669"/>
    <property type="project" value="UniProtKB-UniRule"/>
</dbReference>
<dbReference type="GO" id="GO:0097510">
    <property type="term" value="P:base-excision repair, AP site formation via deaminated base removal"/>
    <property type="evidence" value="ECO:0007669"/>
    <property type="project" value="TreeGrafter"/>
</dbReference>
<dbReference type="CDD" id="cd10027">
    <property type="entry name" value="UDG-F1-like"/>
    <property type="match status" value="1"/>
</dbReference>
<dbReference type="FunFam" id="3.40.470.10:FF:000001">
    <property type="entry name" value="Uracil-DNA glycosylase"/>
    <property type="match status" value="1"/>
</dbReference>
<dbReference type="Gene3D" id="3.40.470.10">
    <property type="entry name" value="Uracil-DNA glycosylase-like domain"/>
    <property type="match status" value="1"/>
</dbReference>
<dbReference type="HAMAP" id="MF_00148">
    <property type="entry name" value="UDG"/>
    <property type="match status" value="1"/>
</dbReference>
<dbReference type="InterPro" id="IPR002043">
    <property type="entry name" value="UDG_fam1"/>
</dbReference>
<dbReference type="InterPro" id="IPR018085">
    <property type="entry name" value="Ura-DNA_Glyclase_AS"/>
</dbReference>
<dbReference type="InterPro" id="IPR005122">
    <property type="entry name" value="Uracil-DNA_glycosylase-like"/>
</dbReference>
<dbReference type="InterPro" id="IPR036895">
    <property type="entry name" value="Uracil-DNA_glycosylase-like_sf"/>
</dbReference>
<dbReference type="NCBIfam" id="NF003588">
    <property type="entry name" value="PRK05254.1-1"/>
    <property type="match status" value="1"/>
</dbReference>
<dbReference type="NCBIfam" id="NF003589">
    <property type="entry name" value="PRK05254.1-2"/>
    <property type="match status" value="1"/>
</dbReference>
<dbReference type="NCBIfam" id="NF003591">
    <property type="entry name" value="PRK05254.1-4"/>
    <property type="match status" value="1"/>
</dbReference>
<dbReference type="NCBIfam" id="NF003592">
    <property type="entry name" value="PRK05254.1-5"/>
    <property type="match status" value="1"/>
</dbReference>
<dbReference type="NCBIfam" id="TIGR00628">
    <property type="entry name" value="ung"/>
    <property type="match status" value="1"/>
</dbReference>
<dbReference type="PANTHER" id="PTHR11264">
    <property type="entry name" value="URACIL-DNA GLYCOSYLASE"/>
    <property type="match status" value="1"/>
</dbReference>
<dbReference type="PANTHER" id="PTHR11264:SF0">
    <property type="entry name" value="URACIL-DNA GLYCOSYLASE"/>
    <property type="match status" value="1"/>
</dbReference>
<dbReference type="Pfam" id="PF03167">
    <property type="entry name" value="UDG"/>
    <property type="match status" value="1"/>
</dbReference>
<dbReference type="SMART" id="SM00986">
    <property type="entry name" value="UDG"/>
    <property type="match status" value="1"/>
</dbReference>
<dbReference type="SMART" id="SM00987">
    <property type="entry name" value="UreE_C"/>
    <property type="match status" value="1"/>
</dbReference>
<dbReference type="SUPFAM" id="SSF52141">
    <property type="entry name" value="Uracil-DNA glycosylase-like"/>
    <property type="match status" value="1"/>
</dbReference>
<dbReference type="PROSITE" id="PS00130">
    <property type="entry name" value="U_DNA_GLYCOSYLASE"/>
    <property type="match status" value="1"/>
</dbReference>
<sequence>MEWSQIFHDITTKHDFKAMHDFLEKEYSTAIVYPDRENIYQAFDLTPFENIKVVILGQDPYHGPNQAHGLAFSVQPNAKFPPSLRNMYKELADDIGCVRQTPHLQDWAREGVLLLNTVLTVRQGEANSHRDIGWETFTDEIIKAVSDYKEHVVFILWGKPAQQKIKLIDTSKHCIIKSVHPSPLSAYRGFFGSKPYSKANAYLESVGKSPINWCESEA</sequence>